<gene>
    <name evidence="1" type="primary">glyS</name>
    <name type="ordered locus">OB1948</name>
</gene>
<comment type="catalytic activity">
    <reaction evidence="1">
        <text>tRNA(Gly) + glycine + ATP = glycyl-tRNA(Gly) + AMP + diphosphate</text>
        <dbReference type="Rhea" id="RHEA:16013"/>
        <dbReference type="Rhea" id="RHEA-COMP:9664"/>
        <dbReference type="Rhea" id="RHEA-COMP:9683"/>
        <dbReference type="ChEBI" id="CHEBI:30616"/>
        <dbReference type="ChEBI" id="CHEBI:33019"/>
        <dbReference type="ChEBI" id="CHEBI:57305"/>
        <dbReference type="ChEBI" id="CHEBI:78442"/>
        <dbReference type="ChEBI" id="CHEBI:78522"/>
        <dbReference type="ChEBI" id="CHEBI:456215"/>
        <dbReference type="EC" id="6.1.1.14"/>
    </reaction>
</comment>
<comment type="subunit">
    <text evidence="1">Tetramer of two alpha and two beta subunits.</text>
</comment>
<comment type="subcellular location">
    <subcellularLocation>
        <location evidence="1">Cytoplasm</location>
    </subcellularLocation>
</comment>
<comment type="similarity">
    <text evidence="1">Belongs to the class-II aminoacyl-tRNA synthetase family.</text>
</comment>
<accession>Q8EPY2</accession>
<reference key="1">
    <citation type="journal article" date="2002" name="Nucleic Acids Res.">
        <title>Genome sequence of Oceanobacillus iheyensis isolated from the Iheya Ridge and its unexpected adaptive capabilities to extreme environments.</title>
        <authorList>
            <person name="Takami H."/>
            <person name="Takaki Y."/>
            <person name="Uchiyama I."/>
        </authorList>
    </citation>
    <scope>NUCLEOTIDE SEQUENCE [LARGE SCALE GENOMIC DNA]</scope>
    <source>
        <strain>DSM 14371 / CIP 107618 / JCM 11309 / KCTC 3954 / HTE831</strain>
    </source>
</reference>
<name>SYGB_OCEIH</name>
<sequence length="692" mass="79558">MARDVLIEIGLEELPARFIDDAELQLYTKTKQWLEENRISSENVISYSTPRRLAVFVKNMAEKQSSIEEDVKGPALKIAKDEDGNWTKAAQGFTKGQGLTTDDIVVREVKGISYIYVTKHIEGRPIQELLPEFKSIIESITFGKNMRWGSETIRYARPIRWLVAMMGNEVIPFEIAHVATNNVTYGHRFLGEEVTIQEPAEYEKTLKDNYVIVKAKDRETLIVEQLSKLEREHGFEIPVDQELLEEVRNLVEFPTAFVGKFEEAYLEIPPEVLITSMKEHQRYFPVHKKGVLQPYFVGVRNGDNYHIETVAKGNEKVLRARLADAEFFYNEDLHQSIDFFQEKLTKVVFQEKLGTYSDKVERMKQIADRISEKLSLESDDRKIIERAAEISKFDLMTSMVNEFTELQGIIGEKYANHFGENSATSQAIKEHYQPKHAKDDLPQTVIGSVVSVADKLDTIAGCIAVGLVPTGSQDPYGLRRQASAILRILHNEKWNLTVEELIDIALDVFQKSNVTIMEKTNEELIEFFRLRAVYLMKDKGLEVDVIHAVTDQKLGNVFVSFEKAKELSDKRNDETFKPIQEALVRVLNLSNKVETNELIREDKLETESEKILYTRYLDIKETYEKQLLHNETKQALATLAQLAAPIHAFFDNNMVMADDLEIRNNRLALIQALTSLILPYADLRKIEWKQQF</sequence>
<organism>
    <name type="scientific">Oceanobacillus iheyensis (strain DSM 14371 / CIP 107618 / JCM 11309 / KCTC 3954 / HTE831)</name>
    <dbReference type="NCBI Taxonomy" id="221109"/>
    <lineage>
        <taxon>Bacteria</taxon>
        <taxon>Bacillati</taxon>
        <taxon>Bacillota</taxon>
        <taxon>Bacilli</taxon>
        <taxon>Bacillales</taxon>
        <taxon>Bacillaceae</taxon>
        <taxon>Oceanobacillus</taxon>
    </lineage>
</organism>
<dbReference type="EC" id="6.1.1.14" evidence="1"/>
<dbReference type="EMBL" id="BA000028">
    <property type="protein sequence ID" value="BAC13904.1"/>
    <property type="molecule type" value="Genomic_DNA"/>
</dbReference>
<dbReference type="RefSeq" id="WP_011066345.1">
    <property type="nucleotide sequence ID" value="NC_004193.1"/>
</dbReference>
<dbReference type="SMR" id="Q8EPY2"/>
<dbReference type="STRING" id="221109.gene:10734194"/>
<dbReference type="KEGG" id="oih:OB1948"/>
<dbReference type="eggNOG" id="COG0751">
    <property type="taxonomic scope" value="Bacteria"/>
</dbReference>
<dbReference type="HOGENOM" id="CLU_007220_2_2_9"/>
<dbReference type="OrthoDB" id="9775440at2"/>
<dbReference type="PhylomeDB" id="Q8EPY2"/>
<dbReference type="Proteomes" id="UP000000822">
    <property type="component" value="Chromosome"/>
</dbReference>
<dbReference type="GO" id="GO:0005829">
    <property type="term" value="C:cytosol"/>
    <property type="evidence" value="ECO:0007669"/>
    <property type="project" value="TreeGrafter"/>
</dbReference>
<dbReference type="GO" id="GO:0004814">
    <property type="term" value="F:arginine-tRNA ligase activity"/>
    <property type="evidence" value="ECO:0007669"/>
    <property type="project" value="InterPro"/>
</dbReference>
<dbReference type="GO" id="GO:0005524">
    <property type="term" value="F:ATP binding"/>
    <property type="evidence" value="ECO:0007669"/>
    <property type="project" value="UniProtKB-UniRule"/>
</dbReference>
<dbReference type="GO" id="GO:0004820">
    <property type="term" value="F:glycine-tRNA ligase activity"/>
    <property type="evidence" value="ECO:0007669"/>
    <property type="project" value="UniProtKB-UniRule"/>
</dbReference>
<dbReference type="GO" id="GO:0006420">
    <property type="term" value="P:arginyl-tRNA aminoacylation"/>
    <property type="evidence" value="ECO:0007669"/>
    <property type="project" value="InterPro"/>
</dbReference>
<dbReference type="GO" id="GO:0006426">
    <property type="term" value="P:glycyl-tRNA aminoacylation"/>
    <property type="evidence" value="ECO:0007669"/>
    <property type="project" value="UniProtKB-UniRule"/>
</dbReference>
<dbReference type="Gene3D" id="1.10.730.10">
    <property type="entry name" value="Isoleucyl-tRNA Synthetase, Domain 1"/>
    <property type="match status" value="1"/>
</dbReference>
<dbReference type="HAMAP" id="MF_00255">
    <property type="entry name" value="Gly_tRNA_synth_beta"/>
    <property type="match status" value="1"/>
</dbReference>
<dbReference type="InterPro" id="IPR008909">
    <property type="entry name" value="DALR_anticod-bd"/>
</dbReference>
<dbReference type="InterPro" id="IPR015944">
    <property type="entry name" value="Gly-tRNA-synth_bsu"/>
</dbReference>
<dbReference type="InterPro" id="IPR006194">
    <property type="entry name" value="Gly-tRNA-synth_heterodimer"/>
</dbReference>
<dbReference type="NCBIfam" id="TIGR00211">
    <property type="entry name" value="glyS"/>
    <property type="match status" value="1"/>
</dbReference>
<dbReference type="PANTHER" id="PTHR30075:SF2">
    <property type="entry name" value="GLYCINE--TRNA LIGASE, CHLOROPLASTIC_MITOCHONDRIAL 2"/>
    <property type="match status" value="1"/>
</dbReference>
<dbReference type="PANTHER" id="PTHR30075">
    <property type="entry name" value="GLYCYL-TRNA SYNTHETASE"/>
    <property type="match status" value="1"/>
</dbReference>
<dbReference type="Pfam" id="PF05746">
    <property type="entry name" value="DALR_1"/>
    <property type="match status" value="1"/>
</dbReference>
<dbReference type="Pfam" id="PF02092">
    <property type="entry name" value="tRNA_synt_2f"/>
    <property type="match status" value="1"/>
</dbReference>
<dbReference type="PRINTS" id="PR01045">
    <property type="entry name" value="TRNASYNTHGB"/>
</dbReference>
<dbReference type="SUPFAM" id="SSF109604">
    <property type="entry name" value="HD-domain/PDEase-like"/>
    <property type="match status" value="1"/>
</dbReference>
<dbReference type="PROSITE" id="PS50861">
    <property type="entry name" value="AA_TRNA_LIGASE_II_GLYAB"/>
    <property type="match status" value="1"/>
</dbReference>
<evidence type="ECO:0000255" key="1">
    <source>
        <dbReference type="HAMAP-Rule" id="MF_00255"/>
    </source>
</evidence>
<protein>
    <recommendedName>
        <fullName evidence="1">Glycine--tRNA ligase beta subunit</fullName>
        <ecNumber evidence="1">6.1.1.14</ecNumber>
    </recommendedName>
    <alternativeName>
        <fullName evidence="1">Glycyl-tRNA synthetase beta subunit</fullName>
        <shortName evidence="1">GlyRS</shortName>
    </alternativeName>
</protein>
<proteinExistence type="inferred from homology"/>
<feature type="chain" id="PRO_1000006380" description="Glycine--tRNA ligase beta subunit">
    <location>
        <begin position="1"/>
        <end position="692"/>
    </location>
</feature>
<keyword id="KW-0030">Aminoacyl-tRNA synthetase</keyword>
<keyword id="KW-0067">ATP-binding</keyword>
<keyword id="KW-0963">Cytoplasm</keyword>
<keyword id="KW-0436">Ligase</keyword>
<keyword id="KW-0547">Nucleotide-binding</keyword>
<keyword id="KW-0648">Protein biosynthesis</keyword>
<keyword id="KW-1185">Reference proteome</keyword>